<sequence>MTTLRLLISDSYDPWFNLAVEEYIFRQMPATQRVLFLWRNADTVVIGRAQNPWKECNTRRMEEDNVRLARRSSGGGAVFHDLGNTCFTFMAGKPEYDKTISTHIVLAALNSLGVMADASGRNDLVVKTPDGDRKVSGSAYRETKDRGFHHGTLLLNADLSRLANYLNPDKKKLAAKGITSVRSRVANLTELLPGITHEQVCQAVTEAFFAHYGERIDAEVISPDKTPDLPNFTETFARQSSWEWNFGQAPAFSHLLDERFTWGGVELHFDVEKGVITRAQAFTDSLNPAPLEALAGRLQGCQYRADKLQETCEALIATFPEQESELRELANWVAGAVR</sequence>
<protein>
    <recommendedName>
        <fullName evidence="1">Lipoate-protein ligase A</fullName>
        <ecNumber evidence="1">6.3.1.20</ecNumber>
    </recommendedName>
    <alternativeName>
        <fullName evidence="1">Lipoate--protein ligase</fullName>
    </alternativeName>
</protein>
<reference key="1">
    <citation type="journal article" date="2004" name="Nat. Genet.">
        <title>Comparison of genome degradation in Paratyphi A and Typhi, human-restricted serovars of Salmonella enterica that cause typhoid.</title>
        <authorList>
            <person name="McClelland M."/>
            <person name="Sanderson K.E."/>
            <person name="Clifton S.W."/>
            <person name="Latreille P."/>
            <person name="Porwollik S."/>
            <person name="Sabo A."/>
            <person name="Meyer R."/>
            <person name="Bieri T."/>
            <person name="Ozersky P."/>
            <person name="McLellan M."/>
            <person name="Harkins C.R."/>
            <person name="Wang C."/>
            <person name="Nguyen C."/>
            <person name="Berghoff A."/>
            <person name="Elliott G."/>
            <person name="Kohlberg S."/>
            <person name="Strong C."/>
            <person name="Du F."/>
            <person name="Carter J."/>
            <person name="Kremizki C."/>
            <person name="Layman D."/>
            <person name="Leonard S."/>
            <person name="Sun H."/>
            <person name="Fulton L."/>
            <person name="Nash W."/>
            <person name="Miner T."/>
            <person name="Minx P."/>
            <person name="Delehaunty K."/>
            <person name="Fronick C."/>
            <person name="Magrini V."/>
            <person name="Nhan M."/>
            <person name="Warren W."/>
            <person name="Florea L."/>
            <person name="Spieth J."/>
            <person name="Wilson R.K."/>
        </authorList>
    </citation>
    <scope>NUCLEOTIDE SEQUENCE [LARGE SCALE GENOMIC DNA]</scope>
    <source>
        <strain>ATCC 9150 / SARB42</strain>
    </source>
</reference>
<comment type="function">
    <text evidence="1">Catalyzes both the ATP-dependent activation of exogenously supplied lipoate to lipoyl-AMP and the transfer of the activated lipoyl onto the lipoyl domains of lipoate-dependent enzymes.</text>
</comment>
<comment type="catalytic activity">
    <reaction evidence="1">
        <text>L-lysyl-[lipoyl-carrier protein] + (R)-lipoate + ATP = N(6)-[(R)-lipoyl]-L-lysyl-[lipoyl-carrier protein] + AMP + diphosphate + H(+)</text>
        <dbReference type="Rhea" id="RHEA:49288"/>
        <dbReference type="Rhea" id="RHEA-COMP:10500"/>
        <dbReference type="Rhea" id="RHEA-COMP:10502"/>
        <dbReference type="ChEBI" id="CHEBI:15378"/>
        <dbReference type="ChEBI" id="CHEBI:29969"/>
        <dbReference type="ChEBI" id="CHEBI:30616"/>
        <dbReference type="ChEBI" id="CHEBI:33019"/>
        <dbReference type="ChEBI" id="CHEBI:83088"/>
        <dbReference type="ChEBI" id="CHEBI:83099"/>
        <dbReference type="ChEBI" id="CHEBI:456215"/>
        <dbReference type="EC" id="6.3.1.20"/>
    </reaction>
</comment>
<comment type="pathway">
    <text evidence="1">Protein modification; protein lipoylation via exogenous pathway; protein N(6)-(lipoyl)lysine from lipoate: step 1/2.</text>
</comment>
<comment type="pathway">
    <text evidence="1">Protein modification; protein lipoylation via exogenous pathway; protein N(6)-(lipoyl)lysine from lipoate: step 2/2.</text>
</comment>
<comment type="subunit">
    <text evidence="1">Monomer.</text>
</comment>
<comment type="subcellular location">
    <subcellularLocation>
        <location evidence="1">Cytoplasm</location>
    </subcellularLocation>
</comment>
<comment type="miscellaneous">
    <text evidence="1">In the transfer reaction, the free carboxyl group of lipoic acid is attached via an amide linkage to the epsilon-amino group of a specific lysine residue of lipoyl domains of lipoate-dependent enzymes.</text>
</comment>
<comment type="similarity">
    <text evidence="1">Belongs to the LplA family.</text>
</comment>
<accession>Q5PK29</accession>
<proteinExistence type="inferred from homology"/>
<feature type="chain" id="PRO_1000069386" description="Lipoate-protein ligase A">
    <location>
        <begin position="1"/>
        <end position="338"/>
    </location>
</feature>
<feature type="domain" description="BPL/LPL catalytic" evidence="2">
    <location>
        <begin position="29"/>
        <end position="216"/>
    </location>
</feature>
<feature type="binding site" evidence="1">
    <location>
        <position position="71"/>
    </location>
    <ligand>
        <name>ATP</name>
        <dbReference type="ChEBI" id="CHEBI:30616"/>
    </ligand>
</feature>
<feature type="binding site" evidence="1">
    <location>
        <begin position="76"/>
        <end position="79"/>
    </location>
    <ligand>
        <name>ATP</name>
        <dbReference type="ChEBI" id="CHEBI:30616"/>
    </ligand>
</feature>
<feature type="binding site" evidence="1">
    <location>
        <position position="134"/>
    </location>
    <ligand>
        <name>(R)-lipoate</name>
        <dbReference type="ChEBI" id="CHEBI:83088"/>
    </ligand>
</feature>
<feature type="binding site" evidence="1">
    <location>
        <position position="134"/>
    </location>
    <ligand>
        <name>ATP</name>
        <dbReference type="ChEBI" id="CHEBI:30616"/>
    </ligand>
</feature>
<dbReference type="EC" id="6.3.1.20" evidence="1"/>
<dbReference type="EMBL" id="CP000026">
    <property type="protein sequence ID" value="AAV80109.1"/>
    <property type="molecule type" value="Genomic_DNA"/>
</dbReference>
<dbReference type="RefSeq" id="WP_000209782.1">
    <property type="nucleotide sequence ID" value="NC_006511.1"/>
</dbReference>
<dbReference type="SMR" id="Q5PK29"/>
<dbReference type="KEGG" id="spt:SPA4386"/>
<dbReference type="HOGENOM" id="CLU_022986_0_1_6"/>
<dbReference type="UniPathway" id="UPA00537">
    <property type="reaction ID" value="UER00594"/>
</dbReference>
<dbReference type="UniPathway" id="UPA00537">
    <property type="reaction ID" value="UER00595"/>
</dbReference>
<dbReference type="Proteomes" id="UP000008185">
    <property type="component" value="Chromosome"/>
</dbReference>
<dbReference type="GO" id="GO:0005829">
    <property type="term" value="C:cytosol"/>
    <property type="evidence" value="ECO:0007669"/>
    <property type="project" value="TreeGrafter"/>
</dbReference>
<dbReference type="GO" id="GO:0005524">
    <property type="term" value="F:ATP binding"/>
    <property type="evidence" value="ECO:0007669"/>
    <property type="project" value="UniProtKB-KW"/>
</dbReference>
<dbReference type="GO" id="GO:0016979">
    <property type="term" value="F:lipoate-protein ligase activity"/>
    <property type="evidence" value="ECO:0007669"/>
    <property type="project" value="UniProtKB-UniRule"/>
</dbReference>
<dbReference type="GO" id="GO:0017118">
    <property type="term" value="F:lipoyltransferase activity"/>
    <property type="evidence" value="ECO:0007669"/>
    <property type="project" value="TreeGrafter"/>
</dbReference>
<dbReference type="GO" id="GO:0036211">
    <property type="term" value="P:protein modification process"/>
    <property type="evidence" value="ECO:0007669"/>
    <property type="project" value="InterPro"/>
</dbReference>
<dbReference type="CDD" id="cd16443">
    <property type="entry name" value="LplA"/>
    <property type="match status" value="1"/>
</dbReference>
<dbReference type="FunFam" id="3.30.390.50:FF:000002">
    <property type="entry name" value="Lipoate-protein ligase A"/>
    <property type="match status" value="1"/>
</dbReference>
<dbReference type="FunFam" id="3.30.930.10:FF:000024">
    <property type="entry name" value="Lipoate-protein ligase A"/>
    <property type="match status" value="1"/>
</dbReference>
<dbReference type="Gene3D" id="3.30.930.10">
    <property type="entry name" value="Bira Bifunctional Protein, Domain 2"/>
    <property type="match status" value="1"/>
</dbReference>
<dbReference type="Gene3D" id="3.30.390.50">
    <property type="entry name" value="CO dehydrogenase flavoprotein, C-terminal domain"/>
    <property type="match status" value="1"/>
</dbReference>
<dbReference type="HAMAP" id="MF_01602">
    <property type="entry name" value="LplA"/>
    <property type="match status" value="1"/>
</dbReference>
<dbReference type="InterPro" id="IPR045864">
    <property type="entry name" value="aa-tRNA-synth_II/BPL/LPL"/>
</dbReference>
<dbReference type="InterPro" id="IPR004143">
    <property type="entry name" value="BPL_LPL_catalytic"/>
</dbReference>
<dbReference type="InterPro" id="IPR023741">
    <property type="entry name" value="Lipoate_ligase_A"/>
</dbReference>
<dbReference type="InterPro" id="IPR019491">
    <property type="entry name" value="Lipoate_protein_ligase_C"/>
</dbReference>
<dbReference type="InterPro" id="IPR004562">
    <property type="entry name" value="LipoylTrfase_LipoateP_Ligase"/>
</dbReference>
<dbReference type="NCBIfam" id="TIGR00545">
    <property type="entry name" value="lipoyltrans"/>
    <property type="match status" value="1"/>
</dbReference>
<dbReference type="PANTHER" id="PTHR12561">
    <property type="entry name" value="LIPOATE-PROTEIN LIGASE"/>
    <property type="match status" value="1"/>
</dbReference>
<dbReference type="PANTHER" id="PTHR12561:SF3">
    <property type="entry name" value="LIPOYLTRANSFERASE 1, MITOCHONDRIAL"/>
    <property type="match status" value="1"/>
</dbReference>
<dbReference type="Pfam" id="PF10437">
    <property type="entry name" value="Lip_prot_lig_C"/>
    <property type="match status" value="1"/>
</dbReference>
<dbReference type="Pfam" id="PF21948">
    <property type="entry name" value="LplA-B_cat"/>
    <property type="match status" value="1"/>
</dbReference>
<dbReference type="SUPFAM" id="SSF55681">
    <property type="entry name" value="Class II aaRS and biotin synthetases"/>
    <property type="match status" value="1"/>
</dbReference>
<dbReference type="SUPFAM" id="SSF82649">
    <property type="entry name" value="SufE/NifU"/>
    <property type="match status" value="1"/>
</dbReference>
<dbReference type="PROSITE" id="PS51733">
    <property type="entry name" value="BPL_LPL_CATALYTIC"/>
    <property type="match status" value="1"/>
</dbReference>
<name>LPLA_SALPA</name>
<keyword id="KW-0067">ATP-binding</keyword>
<keyword id="KW-0963">Cytoplasm</keyword>
<keyword id="KW-0436">Ligase</keyword>
<keyword id="KW-0547">Nucleotide-binding</keyword>
<gene>
    <name evidence="1" type="primary">lplA</name>
    <name type="ordered locus">SPA4386</name>
</gene>
<organism>
    <name type="scientific">Salmonella paratyphi A (strain ATCC 9150 / SARB42)</name>
    <dbReference type="NCBI Taxonomy" id="295319"/>
    <lineage>
        <taxon>Bacteria</taxon>
        <taxon>Pseudomonadati</taxon>
        <taxon>Pseudomonadota</taxon>
        <taxon>Gammaproteobacteria</taxon>
        <taxon>Enterobacterales</taxon>
        <taxon>Enterobacteriaceae</taxon>
        <taxon>Salmonella</taxon>
    </lineage>
</organism>
<evidence type="ECO:0000255" key="1">
    <source>
        <dbReference type="HAMAP-Rule" id="MF_01602"/>
    </source>
</evidence>
<evidence type="ECO:0000255" key="2">
    <source>
        <dbReference type="PROSITE-ProRule" id="PRU01067"/>
    </source>
</evidence>